<evidence type="ECO:0000255" key="1"/>
<evidence type="ECO:0000255" key="2">
    <source>
        <dbReference type="HAMAP-Rule" id="MF_01260"/>
    </source>
</evidence>
<evidence type="ECO:0000305" key="3"/>
<keyword id="KW-0093">Biotin biosynthesis</keyword>
<keyword id="KW-0963">Cytoplasm</keyword>
<keyword id="KW-0378">Hydrolase</keyword>
<keyword id="KW-0719">Serine esterase</keyword>
<gene>
    <name evidence="2" type="primary">bioH</name>
    <name type="ordered locus">VP0148</name>
</gene>
<organism>
    <name type="scientific">Vibrio parahaemolyticus serotype O3:K6 (strain RIMD 2210633)</name>
    <dbReference type="NCBI Taxonomy" id="223926"/>
    <lineage>
        <taxon>Bacteria</taxon>
        <taxon>Pseudomonadati</taxon>
        <taxon>Pseudomonadota</taxon>
        <taxon>Gammaproteobacteria</taxon>
        <taxon>Vibrionales</taxon>
        <taxon>Vibrionaceae</taxon>
        <taxon>Vibrio</taxon>
    </lineage>
</organism>
<feature type="chain" id="PRO_0000204497" description="Pimeloyl-[acyl-carrier protein] methyl ester esterase">
    <location>
        <begin position="1"/>
        <end position="255"/>
    </location>
</feature>
<feature type="domain" description="AB hydrolase-1" evidence="1">
    <location>
        <begin position="16"/>
        <end position="241"/>
    </location>
</feature>
<feature type="active site" description="Nucleophile" evidence="2">
    <location>
        <position position="82"/>
    </location>
</feature>
<feature type="active site" evidence="2">
    <location>
        <position position="207"/>
    </location>
</feature>
<feature type="active site" evidence="2">
    <location>
        <position position="235"/>
    </location>
</feature>
<feature type="binding site" evidence="2">
    <location>
        <position position="22"/>
    </location>
    <ligand>
        <name>substrate</name>
    </ligand>
</feature>
<feature type="binding site" evidence="2">
    <location>
        <begin position="82"/>
        <end position="83"/>
    </location>
    <ligand>
        <name>substrate</name>
    </ligand>
</feature>
<feature type="binding site" evidence="2">
    <location>
        <begin position="143"/>
        <end position="147"/>
    </location>
    <ligand>
        <name>substrate</name>
    </ligand>
</feature>
<feature type="binding site" evidence="2">
    <location>
        <position position="235"/>
    </location>
    <ligand>
        <name>substrate</name>
    </ligand>
</feature>
<sequence length="255" mass="28063">MSTNLHWQSFGQGPDLVLLHGWGMNGAVWQQTVESLQADFCVHVVDLPGYGFSAEHHGEDLAQIAAMVLKDAPEKAVWLGWSLGGLVATHIALNAPQRVSKLITVASSPKFAAEKPWRGIQPNVLSAFTSQLLEDFSLTIERFMALQAMGSPSARKDVKQLKQAVLSRPQPNPESLLVGLNILADVDLRDALISLTMPMLRLYGRLDGLVPIKVATDLSQQLPHTQQFVFSQSSHAPFMTEHDEFCAQVRDFAQD</sequence>
<name>BIOH_VIBPA</name>
<proteinExistence type="inferred from homology"/>
<comment type="function">
    <text evidence="2">The physiological role of BioH is to remove the methyl group introduced by BioC when the pimeloyl moiety is complete. It allows to synthesize pimeloyl-ACP via the fatty acid synthetic pathway through the hydrolysis of the ester bonds of pimeloyl-ACP esters.</text>
</comment>
<comment type="catalytic activity">
    <reaction evidence="2">
        <text>6-carboxyhexanoyl-[ACP] methyl ester + H2O = 6-carboxyhexanoyl-[ACP] + methanol + H(+)</text>
        <dbReference type="Rhea" id="RHEA:42700"/>
        <dbReference type="Rhea" id="RHEA-COMP:9955"/>
        <dbReference type="Rhea" id="RHEA-COMP:10186"/>
        <dbReference type="ChEBI" id="CHEBI:15377"/>
        <dbReference type="ChEBI" id="CHEBI:15378"/>
        <dbReference type="ChEBI" id="CHEBI:17790"/>
        <dbReference type="ChEBI" id="CHEBI:78846"/>
        <dbReference type="ChEBI" id="CHEBI:82735"/>
        <dbReference type="EC" id="3.1.1.85"/>
    </reaction>
</comment>
<comment type="pathway">
    <text evidence="2">Cofactor biosynthesis; biotin biosynthesis.</text>
</comment>
<comment type="subunit">
    <text evidence="2">Monomer.</text>
</comment>
<comment type="subcellular location">
    <subcellularLocation>
        <location evidence="2">Cytoplasm</location>
    </subcellularLocation>
</comment>
<comment type="similarity">
    <text evidence="2">Belongs to the AB hydrolase superfamily. Carboxylesterase BioH family.</text>
</comment>
<comment type="sequence caution" evidence="3">
    <conflict type="erroneous initiation">
        <sequence resource="EMBL-CDS" id="BAC58411"/>
    </conflict>
</comment>
<accession>Q87TC2</accession>
<dbReference type="EC" id="3.1.1.85" evidence="2"/>
<dbReference type="EMBL" id="BA000031">
    <property type="protein sequence ID" value="BAC58411.1"/>
    <property type="status" value="ALT_INIT"/>
    <property type="molecule type" value="Genomic_DNA"/>
</dbReference>
<dbReference type="RefSeq" id="NP_796527.1">
    <property type="nucleotide sequence ID" value="NC_004603.1"/>
</dbReference>
<dbReference type="RefSeq" id="WP_005489494.1">
    <property type="nucleotide sequence ID" value="NC_004603.1"/>
</dbReference>
<dbReference type="SMR" id="Q87TC2"/>
<dbReference type="ESTHER" id="vibpa-VP0148">
    <property type="family name" value="BioH"/>
</dbReference>
<dbReference type="GeneID" id="1187615"/>
<dbReference type="KEGG" id="vpa:VP0148"/>
<dbReference type="PATRIC" id="fig|223926.6.peg.140"/>
<dbReference type="eggNOG" id="COG0596">
    <property type="taxonomic scope" value="Bacteria"/>
</dbReference>
<dbReference type="HOGENOM" id="CLU_020336_12_2_6"/>
<dbReference type="UniPathway" id="UPA00078"/>
<dbReference type="Proteomes" id="UP000002493">
    <property type="component" value="Chromosome 1"/>
</dbReference>
<dbReference type="GO" id="GO:0005737">
    <property type="term" value="C:cytoplasm"/>
    <property type="evidence" value="ECO:0007669"/>
    <property type="project" value="UniProtKB-SubCell"/>
</dbReference>
<dbReference type="GO" id="GO:0016020">
    <property type="term" value="C:membrane"/>
    <property type="evidence" value="ECO:0007669"/>
    <property type="project" value="TreeGrafter"/>
</dbReference>
<dbReference type="GO" id="GO:0090499">
    <property type="term" value="F:pimelyl-[acyl-carrier protein] methyl ester esterase activity"/>
    <property type="evidence" value="ECO:0007669"/>
    <property type="project" value="UniProtKB-EC"/>
</dbReference>
<dbReference type="GO" id="GO:0009102">
    <property type="term" value="P:biotin biosynthetic process"/>
    <property type="evidence" value="ECO:0007669"/>
    <property type="project" value="UniProtKB-UniRule"/>
</dbReference>
<dbReference type="Gene3D" id="3.40.50.1820">
    <property type="entry name" value="alpha/beta hydrolase"/>
    <property type="match status" value="1"/>
</dbReference>
<dbReference type="HAMAP" id="MF_01260">
    <property type="entry name" value="Carboxylester"/>
    <property type="match status" value="1"/>
</dbReference>
<dbReference type="InterPro" id="IPR000073">
    <property type="entry name" value="AB_hydrolase_1"/>
</dbReference>
<dbReference type="InterPro" id="IPR029058">
    <property type="entry name" value="AB_hydrolase_fold"/>
</dbReference>
<dbReference type="InterPro" id="IPR050266">
    <property type="entry name" value="AB_hydrolase_sf"/>
</dbReference>
<dbReference type="InterPro" id="IPR010076">
    <property type="entry name" value="BioH"/>
</dbReference>
<dbReference type="NCBIfam" id="TIGR01738">
    <property type="entry name" value="bioH"/>
    <property type="match status" value="1"/>
</dbReference>
<dbReference type="PANTHER" id="PTHR43798:SF31">
    <property type="entry name" value="AB HYDROLASE SUPERFAMILY PROTEIN YCLE"/>
    <property type="match status" value="1"/>
</dbReference>
<dbReference type="PANTHER" id="PTHR43798">
    <property type="entry name" value="MONOACYLGLYCEROL LIPASE"/>
    <property type="match status" value="1"/>
</dbReference>
<dbReference type="Pfam" id="PF00561">
    <property type="entry name" value="Abhydrolase_1"/>
    <property type="match status" value="1"/>
</dbReference>
<dbReference type="SUPFAM" id="SSF53474">
    <property type="entry name" value="alpha/beta-Hydrolases"/>
    <property type="match status" value="1"/>
</dbReference>
<reference key="1">
    <citation type="journal article" date="2003" name="Lancet">
        <title>Genome sequence of Vibrio parahaemolyticus: a pathogenic mechanism distinct from that of V. cholerae.</title>
        <authorList>
            <person name="Makino K."/>
            <person name="Oshima K."/>
            <person name="Kurokawa K."/>
            <person name="Yokoyama K."/>
            <person name="Uda T."/>
            <person name="Tagomori K."/>
            <person name="Iijima Y."/>
            <person name="Najima M."/>
            <person name="Nakano M."/>
            <person name="Yamashita A."/>
            <person name="Kubota Y."/>
            <person name="Kimura S."/>
            <person name="Yasunaga T."/>
            <person name="Honda T."/>
            <person name="Shinagawa H."/>
            <person name="Hattori M."/>
            <person name="Iida T."/>
        </authorList>
    </citation>
    <scope>NUCLEOTIDE SEQUENCE [LARGE SCALE GENOMIC DNA]</scope>
    <source>
        <strain>RIMD 2210633</strain>
    </source>
</reference>
<protein>
    <recommendedName>
        <fullName evidence="2">Pimeloyl-[acyl-carrier protein] methyl ester esterase</fullName>
        <ecNumber evidence="2">3.1.1.85</ecNumber>
    </recommendedName>
    <alternativeName>
        <fullName evidence="2">Biotin synthesis protein BioH</fullName>
    </alternativeName>
    <alternativeName>
        <fullName evidence="2">Carboxylesterase BioH</fullName>
    </alternativeName>
</protein>